<geneLocation type="plasmid" evidence="10">
    <name>pSMED02</name>
</geneLocation>
<reference key="1">
    <citation type="submission" date="2007-06" db="EMBL/GenBank/DDBJ databases">
        <title>Complete sequence of Sinorhizobium medicae WSM419 plasmid pSMED02.</title>
        <authorList>
            <consortium name="US DOE Joint Genome Institute"/>
            <person name="Copeland A."/>
            <person name="Lucas S."/>
            <person name="Lapidus A."/>
            <person name="Barry K."/>
            <person name="Glavina del Rio T."/>
            <person name="Dalin E."/>
            <person name="Tice H."/>
            <person name="Pitluck S."/>
            <person name="Chain P."/>
            <person name="Malfatti S."/>
            <person name="Shin M."/>
            <person name="Vergez L."/>
            <person name="Schmutz J."/>
            <person name="Larimer F."/>
            <person name="Land M."/>
            <person name="Hauser L."/>
            <person name="Kyrpides N."/>
            <person name="Mikhailova N."/>
            <person name="Reeve W.G."/>
            <person name="Richardson P."/>
        </authorList>
    </citation>
    <scope>NUCLEOTIDE SEQUENCE [LARGE SCALE GENOMIC DNA]</scope>
    <source>
        <strain>WSM419</strain>
    </source>
</reference>
<dbReference type="EMBL" id="CP000740">
    <property type="protein sequence ID" value="ABR64624.1"/>
    <property type="molecule type" value="Genomic_DNA"/>
</dbReference>
<dbReference type="EMBL" id="CP000740">
    <property type="protein sequence ID" value="ABR64864.1"/>
    <property type="molecule type" value="Genomic_DNA"/>
</dbReference>
<dbReference type="RefSeq" id="YP_001314557.1">
    <property type="nucleotide sequence ID" value="NC_009621.1"/>
</dbReference>
<dbReference type="RefSeq" id="YP_001314797.1">
    <property type="nucleotide sequence ID" value="NC_009621.1"/>
</dbReference>
<dbReference type="SMR" id="A6ULU4"/>
<dbReference type="KEGG" id="smd:Smed_5932"/>
<dbReference type="KEGG" id="smd:Smed_6265"/>
<dbReference type="PATRIC" id="fig|366394.8.peg.2437"/>
<dbReference type="eggNOG" id="COG2010">
    <property type="taxonomic scope" value="Bacteria"/>
</dbReference>
<dbReference type="HOGENOM" id="CLU_047545_2_0_5"/>
<dbReference type="OrthoDB" id="9811281at2"/>
<dbReference type="UniPathway" id="UPA00705"/>
<dbReference type="Proteomes" id="UP000001108">
    <property type="component" value="Plasmid pSMED02"/>
</dbReference>
<dbReference type="GO" id="GO:0005886">
    <property type="term" value="C:plasma membrane"/>
    <property type="evidence" value="ECO:0007669"/>
    <property type="project" value="UniProtKB-SubCell"/>
</dbReference>
<dbReference type="GO" id="GO:0009055">
    <property type="term" value="F:electron transfer activity"/>
    <property type="evidence" value="ECO:0007669"/>
    <property type="project" value="InterPro"/>
</dbReference>
<dbReference type="GO" id="GO:0020037">
    <property type="term" value="F:heme binding"/>
    <property type="evidence" value="ECO:0007669"/>
    <property type="project" value="InterPro"/>
</dbReference>
<dbReference type="GO" id="GO:0005506">
    <property type="term" value="F:iron ion binding"/>
    <property type="evidence" value="ECO:0007669"/>
    <property type="project" value="InterPro"/>
</dbReference>
<dbReference type="GO" id="GO:0016491">
    <property type="term" value="F:oxidoreductase activity"/>
    <property type="evidence" value="ECO:0007669"/>
    <property type="project" value="UniProtKB-KW"/>
</dbReference>
<dbReference type="GO" id="GO:0006119">
    <property type="term" value="P:oxidative phosphorylation"/>
    <property type="evidence" value="ECO:0007669"/>
    <property type="project" value="UniProtKB-UniPathway"/>
</dbReference>
<dbReference type="GO" id="GO:1902600">
    <property type="term" value="P:proton transmembrane transport"/>
    <property type="evidence" value="ECO:0007669"/>
    <property type="project" value="UniProtKB-KW"/>
</dbReference>
<dbReference type="Gene3D" id="6.10.280.130">
    <property type="match status" value="1"/>
</dbReference>
<dbReference type="Gene3D" id="1.10.760.10">
    <property type="entry name" value="Cytochrome c-like domain"/>
    <property type="match status" value="2"/>
</dbReference>
<dbReference type="InterPro" id="IPR032858">
    <property type="entry name" value="CcoP_N"/>
</dbReference>
<dbReference type="InterPro" id="IPR038414">
    <property type="entry name" value="CcoP_N_sf"/>
</dbReference>
<dbReference type="InterPro" id="IPR009056">
    <property type="entry name" value="Cyt_c-like_dom"/>
</dbReference>
<dbReference type="InterPro" id="IPR036909">
    <property type="entry name" value="Cyt_c-like_dom_sf"/>
</dbReference>
<dbReference type="InterPro" id="IPR008168">
    <property type="entry name" value="Cyt_C_IC"/>
</dbReference>
<dbReference type="InterPro" id="IPR004678">
    <property type="entry name" value="Cyt_c_oxidase_cbb3_su3"/>
</dbReference>
<dbReference type="InterPro" id="IPR050597">
    <property type="entry name" value="Cytochrome_c_Oxidase_Subunit"/>
</dbReference>
<dbReference type="NCBIfam" id="TIGR00782">
    <property type="entry name" value="ccoP"/>
    <property type="match status" value="1"/>
</dbReference>
<dbReference type="PANTHER" id="PTHR33751">
    <property type="entry name" value="CBB3-TYPE CYTOCHROME C OXIDASE SUBUNIT FIXP"/>
    <property type="match status" value="1"/>
</dbReference>
<dbReference type="PANTHER" id="PTHR33751:SF1">
    <property type="entry name" value="CBB3-TYPE CYTOCHROME C OXIDASE SUBUNIT FIXP"/>
    <property type="match status" value="1"/>
</dbReference>
<dbReference type="Pfam" id="PF13442">
    <property type="entry name" value="Cytochrome_CBB3"/>
    <property type="match status" value="2"/>
</dbReference>
<dbReference type="Pfam" id="PF14715">
    <property type="entry name" value="FixP_N"/>
    <property type="match status" value="1"/>
</dbReference>
<dbReference type="PIRSF" id="PIRSF000006">
    <property type="entry name" value="Cbb3-Cox_fixP"/>
    <property type="match status" value="1"/>
</dbReference>
<dbReference type="PRINTS" id="PR00605">
    <property type="entry name" value="CYTCHROMECIC"/>
</dbReference>
<dbReference type="SUPFAM" id="SSF46626">
    <property type="entry name" value="Cytochrome c"/>
    <property type="match status" value="2"/>
</dbReference>
<dbReference type="PROSITE" id="PS51007">
    <property type="entry name" value="CYTC"/>
    <property type="match status" value="2"/>
</dbReference>
<evidence type="ECO:0000250" key="1">
    <source>
        <dbReference type="UniProtKB" id="D5ARP7"/>
    </source>
</evidence>
<evidence type="ECO:0000250" key="2">
    <source>
        <dbReference type="UniProtKB" id="D9IA45"/>
    </source>
</evidence>
<evidence type="ECO:0000250" key="3">
    <source>
        <dbReference type="UniProtKB" id="Q03075"/>
    </source>
</evidence>
<evidence type="ECO:0000250" key="4">
    <source>
        <dbReference type="UniProtKB" id="Q3J015"/>
    </source>
</evidence>
<evidence type="ECO:0000250" key="5">
    <source>
        <dbReference type="UniProtKB" id="Q52689"/>
    </source>
</evidence>
<evidence type="ECO:0000250" key="6">
    <source>
        <dbReference type="UniProtKB" id="Q8KS19"/>
    </source>
</evidence>
<evidence type="ECO:0000255" key="7"/>
<evidence type="ECO:0000255" key="8">
    <source>
        <dbReference type="PROSITE-ProRule" id="PRU00433"/>
    </source>
</evidence>
<evidence type="ECO:0000305" key="9"/>
<evidence type="ECO:0000312" key="10">
    <source>
        <dbReference type="EMBL" id="ABR64624.1"/>
    </source>
</evidence>
<gene>
    <name evidence="3" type="primary">fixP</name>
    <name type="ordered locus">Smed_5932</name>
    <name type="ordered locus">Smed_6265</name>
</gene>
<keyword id="KW-0997">Cell inner membrane</keyword>
<keyword id="KW-1003">Cell membrane</keyword>
<keyword id="KW-0249">Electron transport</keyword>
<keyword id="KW-0349">Heme</keyword>
<keyword id="KW-0375">Hydrogen ion transport</keyword>
<keyword id="KW-0406">Ion transport</keyword>
<keyword id="KW-0408">Iron</keyword>
<keyword id="KW-0472">Membrane</keyword>
<keyword id="KW-0479">Metal-binding</keyword>
<keyword id="KW-0560">Oxidoreductase</keyword>
<keyword id="KW-0614">Plasmid</keyword>
<keyword id="KW-0677">Repeat</keyword>
<keyword id="KW-0679">Respiratory chain</keyword>
<keyword id="KW-0812">Transmembrane</keyword>
<keyword id="KW-1133">Transmembrane helix</keyword>
<keyword id="KW-0813">Transport</keyword>
<feature type="chain" id="PRO_0000412301" description="Cbb3-type cytochrome c oxidase subunit FixP">
    <location>
        <begin position="1"/>
        <end position="289"/>
    </location>
</feature>
<feature type="topological domain" description="Cytoplasmic" evidence="4 7">
    <location>
        <begin position="1"/>
        <end position="33"/>
    </location>
</feature>
<feature type="transmembrane region" description="Helical" evidence="7">
    <location>
        <begin position="34"/>
        <end position="56"/>
    </location>
</feature>
<feature type="topological domain" description="Periplasmic" evidence="4 7">
    <location>
        <begin position="57"/>
        <end position="289"/>
    </location>
</feature>
<feature type="domain" description="Cytochrome c 1" evidence="8">
    <location>
        <begin position="110"/>
        <end position="198"/>
    </location>
</feature>
<feature type="domain" description="Cytochrome c 2" evidence="8">
    <location>
        <begin position="205"/>
        <end position="286"/>
    </location>
</feature>
<feature type="binding site" description="covalent" evidence="2">
    <location>
        <position position="123"/>
    </location>
    <ligand>
        <name>heme c</name>
        <dbReference type="ChEBI" id="CHEBI:61717"/>
        <label>1</label>
    </ligand>
</feature>
<feature type="binding site" description="covalent" evidence="2">
    <location>
        <position position="126"/>
    </location>
    <ligand>
        <name>heme c</name>
        <dbReference type="ChEBI" id="CHEBI:61717"/>
        <label>1</label>
    </ligand>
</feature>
<feature type="binding site" description="axial binding residue" evidence="2">
    <location>
        <position position="127"/>
    </location>
    <ligand>
        <name>heme c</name>
        <dbReference type="ChEBI" id="CHEBI:61717"/>
        <label>1</label>
    </ligand>
    <ligandPart>
        <name>Fe</name>
        <dbReference type="ChEBI" id="CHEBI:18248"/>
    </ligandPart>
</feature>
<feature type="binding site" description="axial binding residue" evidence="2">
    <location>
        <position position="175"/>
    </location>
    <ligand>
        <name>heme c</name>
        <dbReference type="ChEBI" id="CHEBI:61717"/>
        <label>2</label>
    </ligand>
    <ligandPart>
        <name>Fe</name>
        <dbReference type="ChEBI" id="CHEBI:18248"/>
    </ligandPart>
</feature>
<feature type="binding site" description="covalent" evidence="2">
    <location>
        <position position="218"/>
    </location>
    <ligand>
        <name>heme c</name>
        <dbReference type="ChEBI" id="CHEBI:61717"/>
        <label>2</label>
    </ligand>
</feature>
<feature type="binding site" description="covalent" evidence="2">
    <location>
        <position position="221"/>
    </location>
    <ligand>
        <name>heme c</name>
        <dbReference type="ChEBI" id="CHEBI:61717"/>
        <label>2</label>
    </ligand>
</feature>
<feature type="binding site" description="axial binding residue" evidence="2">
    <location>
        <position position="222"/>
    </location>
    <ligand>
        <name>heme c</name>
        <dbReference type="ChEBI" id="CHEBI:61717"/>
        <label>2</label>
    </ligand>
    <ligandPart>
        <name>Fe</name>
        <dbReference type="ChEBI" id="CHEBI:18248"/>
    </ligandPart>
</feature>
<feature type="binding site" description="axial binding residue" evidence="2">
    <location>
        <position position="263"/>
    </location>
    <ligand>
        <name>heme c</name>
        <dbReference type="ChEBI" id="CHEBI:61717"/>
        <label>1</label>
    </ligand>
    <ligandPart>
        <name>Fe</name>
        <dbReference type="ChEBI" id="CHEBI:18248"/>
    </ligandPart>
</feature>
<protein>
    <recommendedName>
        <fullName evidence="1">Cbb3-type cytochrome c oxidase subunit FixP</fullName>
        <shortName evidence="1">Cbb3-Cox subunit FixP</shortName>
    </recommendedName>
    <alternativeName>
        <fullName evidence="5">C-type cytochrome FixP</fullName>
        <shortName evidence="1">Cyt c(FixP)</shortName>
    </alternativeName>
    <alternativeName>
        <fullName evidence="10">Cytochrome c oxidase subunit III</fullName>
    </alternativeName>
</protein>
<name>FIXP_SINMW</name>
<organism>
    <name type="scientific">Sinorhizobium medicae (strain WSM419)</name>
    <name type="common">Ensifer medicae</name>
    <dbReference type="NCBI Taxonomy" id="366394"/>
    <lineage>
        <taxon>Bacteria</taxon>
        <taxon>Pseudomonadati</taxon>
        <taxon>Pseudomonadota</taxon>
        <taxon>Alphaproteobacteria</taxon>
        <taxon>Hyphomicrobiales</taxon>
        <taxon>Rhizobiaceae</taxon>
        <taxon>Sinorhizobium/Ensifer group</taxon>
        <taxon>Sinorhizobium</taxon>
    </lineage>
</organism>
<comment type="function">
    <text evidence="1 2 3">C-type cytochrome. Part of the cbb3-type cytochrome c oxidase complex. FixP subunit is required for transferring electrons from donor cytochrome c via its heme groups to FixO subunit. From there, electrons are shuttled to the catalytic binuclear center of FixN subunit where oxygen reduction takes place. The complex also functions as a proton pump (By similarity).</text>
</comment>
<comment type="cofactor">
    <cofactor evidence="2">
        <name>heme c</name>
        <dbReference type="ChEBI" id="CHEBI:61717"/>
    </cofactor>
    <text evidence="2">Binds 2 heme C groups per subunit.</text>
</comment>
<comment type="pathway">
    <text evidence="1">Energy metabolism; oxidative phosphorylation.</text>
</comment>
<comment type="subunit">
    <text evidence="1">Component of the cbb3-type cytochrome c oxidase at least composed of FixN, FixO, FixQ and FixP.</text>
</comment>
<comment type="subcellular location">
    <subcellularLocation>
        <location evidence="6 7">Cell inner membrane</location>
        <topology evidence="6 7">Single-pass membrane protein</topology>
    </subcellularLocation>
</comment>
<comment type="similarity">
    <text evidence="9">Belongs to the CcoP / FixP family.</text>
</comment>
<accession>A6ULU4</accession>
<sequence>MADKHKHVDEVSGVETTGHEWDGIRELNNPLPRWWVYSFYATIIWAIGYAVAYPSWPMLTEATKGVLGYSSRAEVGVELAAAKAAQAGNLEQIALNSVEEIIANPQLQQFAVSAGASVFKVNCAQCHGSGAAGGQGFPNLNDDDWLWGGKPQEIYQTIAHGVRHATDGETRGSEMPPFGDMLTPEQMQQTAAYVMSLTQAPSQPHLVEQGKQVFADNCASCHGADAKGNREMGAPNLADAIWLYGEGEQAVIAQMKTPKHGVMPAWLPRLGDPVVKELAVFVHSLGGGE</sequence>
<proteinExistence type="inferred from homology"/>